<keyword id="KW-0180">Complement pathway</keyword>
<keyword id="KW-1015">Disulfide bond</keyword>
<keyword id="KW-0325">Glycoprotein</keyword>
<keyword id="KW-0378">Hydrolase</keyword>
<keyword id="KW-0391">Immunity</keyword>
<keyword id="KW-0399">Innate immunity</keyword>
<keyword id="KW-0645">Protease</keyword>
<keyword id="KW-1185">Reference proteome</keyword>
<keyword id="KW-0964">Secreted</keyword>
<keyword id="KW-0720">Serine protease</keyword>
<keyword id="KW-0732">Signal</keyword>
<keyword id="KW-0768">Sushi</keyword>
<comment type="function">
    <text evidence="1">Mediates the proteolytic cleavage of HP/haptoglobin in the endoplasmic reticulum.</text>
</comment>
<comment type="subcellular location">
    <subcellularLocation>
        <location>Secreted</location>
    </subcellularLocation>
</comment>
<comment type="tissue specificity">
    <text>Expressed in liver (at protein level).</text>
</comment>
<comment type="similarity">
    <text evidence="4">Belongs to the peptidase S1 family.</text>
</comment>
<evidence type="ECO:0000250" key="1"/>
<evidence type="ECO:0000255" key="2"/>
<evidence type="ECO:0000255" key="3">
    <source>
        <dbReference type="PROSITE-ProRule" id="PRU00059"/>
    </source>
</evidence>
<evidence type="ECO:0000255" key="4">
    <source>
        <dbReference type="PROSITE-ProRule" id="PRU00274"/>
    </source>
</evidence>
<evidence type="ECO:0000255" key="5">
    <source>
        <dbReference type="PROSITE-ProRule" id="PRU00302"/>
    </source>
</evidence>
<evidence type="ECO:0000305" key="6"/>
<gene>
    <name type="primary">C1rl</name>
    <name type="synonym">C1rlp</name>
</gene>
<dbReference type="EC" id="3.4.21.-"/>
<dbReference type="EMBL" id="AK133495">
    <property type="protein sequence ID" value="BAE21686.1"/>
    <property type="molecule type" value="mRNA"/>
</dbReference>
<dbReference type="EMBL" id="AK134207">
    <property type="protein sequence ID" value="BAE22052.1"/>
    <property type="molecule type" value="mRNA"/>
</dbReference>
<dbReference type="EMBL" id="AF456427">
    <property type="protein sequence ID" value="AAP41416.1"/>
    <property type="molecule type" value="Genomic_DNA"/>
</dbReference>
<dbReference type="EMBL" id="AF456428">
    <property type="protein sequence ID" value="AAP41417.1"/>
    <property type="molecule type" value="mRNA"/>
</dbReference>
<dbReference type="EMBL" id="BC070472">
    <property type="protein sequence ID" value="AAH70472.1"/>
    <property type="molecule type" value="mRNA"/>
</dbReference>
<dbReference type="CCDS" id="CCDS20520.1"/>
<dbReference type="RefSeq" id="NP_851989.3">
    <property type="nucleotide sequence ID" value="NM_181344.5"/>
</dbReference>
<dbReference type="SMR" id="Q3UZ09"/>
<dbReference type="FunCoup" id="Q3UZ09">
    <property type="interactions" value="324"/>
</dbReference>
<dbReference type="STRING" id="10090.ENSMUSP00000042883"/>
<dbReference type="MEROPS" id="S01.189"/>
<dbReference type="GlyCosmos" id="Q3UZ09">
    <property type="glycosylation" value="1 site, No reported glycans"/>
</dbReference>
<dbReference type="GlyGen" id="Q3UZ09">
    <property type="glycosylation" value="1 site"/>
</dbReference>
<dbReference type="iPTMnet" id="Q3UZ09"/>
<dbReference type="PhosphoSitePlus" id="Q3UZ09"/>
<dbReference type="SwissPalm" id="Q3UZ09"/>
<dbReference type="CPTAC" id="non-CPTAC-3429"/>
<dbReference type="CPTAC" id="non-CPTAC-3895"/>
<dbReference type="CPTAC" id="non-CPTAC-4018"/>
<dbReference type="PaxDb" id="10090-ENSMUSP00000042883"/>
<dbReference type="PeptideAtlas" id="Q3UZ09"/>
<dbReference type="ProteomicsDB" id="273807"/>
<dbReference type="Antibodypedia" id="1734">
    <property type="antibodies" value="115 antibodies from 21 providers"/>
</dbReference>
<dbReference type="DNASU" id="232371"/>
<dbReference type="Ensembl" id="ENSMUST00000049124.10">
    <property type="protein sequence ID" value="ENSMUSP00000042883.10"/>
    <property type="gene ID" value="ENSMUSG00000038527.10"/>
</dbReference>
<dbReference type="GeneID" id="232371"/>
<dbReference type="KEGG" id="mmu:232371"/>
<dbReference type="UCSC" id="uc009dqy.2">
    <property type="organism name" value="mouse"/>
</dbReference>
<dbReference type="AGR" id="MGI:2660692"/>
<dbReference type="CTD" id="51279"/>
<dbReference type="MGI" id="MGI:2660692">
    <property type="gene designation" value="C1rl"/>
</dbReference>
<dbReference type="VEuPathDB" id="HostDB:ENSMUSG00000038527"/>
<dbReference type="eggNOG" id="KOG3627">
    <property type="taxonomic scope" value="Eukaryota"/>
</dbReference>
<dbReference type="GeneTree" id="ENSGT00940000162495"/>
<dbReference type="HOGENOM" id="CLU_006842_0_0_1"/>
<dbReference type="InParanoid" id="Q3UZ09"/>
<dbReference type="OMA" id="QHESHNF"/>
<dbReference type="OrthoDB" id="6261922at2759"/>
<dbReference type="PhylomeDB" id="Q3UZ09"/>
<dbReference type="TreeFam" id="TF330373"/>
<dbReference type="BioGRID-ORCS" id="232371">
    <property type="hits" value="0 hits in 78 CRISPR screens"/>
</dbReference>
<dbReference type="PRO" id="PR:Q3UZ09"/>
<dbReference type="Proteomes" id="UP000000589">
    <property type="component" value="Chromosome 6"/>
</dbReference>
<dbReference type="RNAct" id="Q3UZ09">
    <property type="molecule type" value="protein"/>
</dbReference>
<dbReference type="Bgee" id="ENSMUSG00000038527">
    <property type="expression patterns" value="Expressed in granulocyte and 42 other cell types or tissues"/>
</dbReference>
<dbReference type="GO" id="GO:0005615">
    <property type="term" value="C:extracellular space"/>
    <property type="evidence" value="ECO:0000314"/>
    <property type="project" value="MGI"/>
</dbReference>
<dbReference type="GO" id="GO:0004252">
    <property type="term" value="F:serine-type endopeptidase activity"/>
    <property type="evidence" value="ECO:0007669"/>
    <property type="project" value="InterPro"/>
</dbReference>
<dbReference type="GO" id="GO:0006958">
    <property type="term" value="P:complement activation, classical pathway"/>
    <property type="evidence" value="ECO:0007669"/>
    <property type="project" value="UniProtKB-KW"/>
</dbReference>
<dbReference type="GO" id="GO:0045087">
    <property type="term" value="P:innate immune response"/>
    <property type="evidence" value="ECO:0007669"/>
    <property type="project" value="UniProtKB-KW"/>
</dbReference>
<dbReference type="GO" id="GO:0006508">
    <property type="term" value="P:proteolysis"/>
    <property type="evidence" value="ECO:0007669"/>
    <property type="project" value="UniProtKB-KW"/>
</dbReference>
<dbReference type="CDD" id="cd00041">
    <property type="entry name" value="CUB"/>
    <property type="match status" value="1"/>
</dbReference>
<dbReference type="CDD" id="cd00190">
    <property type="entry name" value="Tryp_SPc"/>
    <property type="match status" value="1"/>
</dbReference>
<dbReference type="FunFam" id="2.40.10.10:FF:000035">
    <property type="entry name" value="Complement C1r subcomponent"/>
    <property type="match status" value="1"/>
</dbReference>
<dbReference type="FunFam" id="2.40.10.10:FF:000037">
    <property type="entry name" value="Complement C1r subcomponent"/>
    <property type="match status" value="1"/>
</dbReference>
<dbReference type="FunFam" id="2.60.120.290:FF:000044">
    <property type="entry name" value="Complement C1r subcomponent like"/>
    <property type="match status" value="1"/>
</dbReference>
<dbReference type="FunFam" id="2.10.70.10:FF:000165">
    <property type="entry name" value="Complement C1r subcomponent-like protein"/>
    <property type="match status" value="1"/>
</dbReference>
<dbReference type="Gene3D" id="2.10.70.10">
    <property type="entry name" value="Complement Module, domain 1"/>
    <property type="match status" value="1"/>
</dbReference>
<dbReference type="Gene3D" id="2.60.120.290">
    <property type="entry name" value="Spermadhesin, CUB domain"/>
    <property type="match status" value="1"/>
</dbReference>
<dbReference type="Gene3D" id="2.40.10.10">
    <property type="entry name" value="Trypsin-like serine proteases"/>
    <property type="match status" value="2"/>
</dbReference>
<dbReference type="InterPro" id="IPR000859">
    <property type="entry name" value="CUB_dom"/>
</dbReference>
<dbReference type="InterPro" id="IPR009003">
    <property type="entry name" value="Peptidase_S1_PA"/>
</dbReference>
<dbReference type="InterPro" id="IPR043504">
    <property type="entry name" value="Peptidase_S1_PA_chymotrypsin"/>
</dbReference>
<dbReference type="InterPro" id="IPR001314">
    <property type="entry name" value="Peptidase_S1A"/>
</dbReference>
<dbReference type="InterPro" id="IPR035914">
    <property type="entry name" value="Sperma_CUB_dom_sf"/>
</dbReference>
<dbReference type="InterPro" id="IPR001254">
    <property type="entry name" value="Trypsin_dom"/>
</dbReference>
<dbReference type="InterPro" id="IPR033116">
    <property type="entry name" value="TRYPSIN_SER"/>
</dbReference>
<dbReference type="PANTHER" id="PTHR24255:SF26">
    <property type="entry name" value="COMPLEMENT C1R SUBCOMPONENT-LIKE PROTEIN"/>
    <property type="match status" value="1"/>
</dbReference>
<dbReference type="PANTHER" id="PTHR24255">
    <property type="entry name" value="COMPLEMENT COMPONENT 1, S SUBCOMPONENT-RELATED"/>
    <property type="match status" value="1"/>
</dbReference>
<dbReference type="Pfam" id="PF00431">
    <property type="entry name" value="CUB"/>
    <property type="match status" value="1"/>
</dbReference>
<dbReference type="Pfam" id="PF00089">
    <property type="entry name" value="Trypsin"/>
    <property type="match status" value="1"/>
</dbReference>
<dbReference type="PRINTS" id="PR00722">
    <property type="entry name" value="CHYMOTRYPSIN"/>
</dbReference>
<dbReference type="SMART" id="SM00042">
    <property type="entry name" value="CUB"/>
    <property type="match status" value="1"/>
</dbReference>
<dbReference type="SMART" id="SM00020">
    <property type="entry name" value="Tryp_SPc"/>
    <property type="match status" value="1"/>
</dbReference>
<dbReference type="SUPFAM" id="SSF49854">
    <property type="entry name" value="Spermadhesin, CUB domain"/>
    <property type="match status" value="1"/>
</dbReference>
<dbReference type="SUPFAM" id="SSF50494">
    <property type="entry name" value="Trypsin-like serine proteases"/>
    <property type="match status" value="1"/>
</dbReference>
<dbReference type="PROSITE" id="PS01180">
    <property type="entry name" value="CUB"/>
    <property type="match status" value="1"/>
</dbReference>
<dbReference type="PROSITE" id="PS50240">
    <property type="entry name" value="TRYPSIN_DOM"/>
    <property type="match status" value="1"/>
</dbReference>
<dbReference type="PROSITE" id="PS00135">
    <property type="entry name" value="TRYPSIN_SER"/>
    <property type="match status" value="1"/>
</dbReference>
<protein>
    <recommendedName>
        <fullName>Complement C1r subcomponent-like protein</fullName>
        <shortName>C1r-LP</shortName>
        <shortName>C1r-like protein</shortName>
        <ecNumber>3.4.21.-</ecNumber>
    </recommendedName>
</protein>
<feature type="signal peptide" evidence="2">
    <location>
        <begin position="1"/>
        <end position="43"/>
    </location>
</feature>
<feature type="chain" id="PRO_0000318679" description="Complement C1r subcomponent-like protein">
    <location>
        <begin position="44"/>
        <end position="482"/>
    </location>
</feature>
<feature type="domain" description="CUB" evidence="3">
    <location>
        <begin position="44"/>
        <end position="166"/>
    </location>
</feature>
<feature type="domain" description="Sushi" evidence="5">
    <location>
        <begin position="166"/>
        <end position="225"/>
    </location>
</feature>
<feature type="domain" description="Peptidase S1" evidence="4">
    <location>
        <begin position="240"/>
        <end position="479"/>
    </location>
</feature>
<feature type="active site" description="Charge relay system" evidence="1">
    <location>
        <position position="278"/>
    </location>
</feature>
<feature type="active site" description="Charge relay system" evidence="1">
    <location>
        <position position="334"/>
    </location>
</feature>
<feature type="active site" description="Charge relay system" evidence="1">
    <location>
        <position position="431"/>
    </location>
</feature>
<feature type="glycosylation site" description="N-linked (GlcNAc...) asparagine" evidence="2">
    <location>
        <position position="358"/>
    </location>
</feature>
<feature type="disulfide bond" evidence="1">
    <location>
        <begin position="97"/>
        <end position="115"/>
    </location>
</feature>
<feature type="disulfide bond" evidence="5">
    <location>
        <begin position="190"/>
        <end position="223"/>
    </location>
</feature>
<feature type="disulfide bond" evidence="1">
    <location>
        <begin position="397"/>
        <end position="416"/>
    </location>
</feature>
<feature type="disulfide bond" evidence="1">
    <location>
        <begin position="427"/>
        <end position="457"/>
    </location>
</feature>
<feature type="sequence conflict" description="In Ref. 1; BAE21686." evidence="6" ref="1">
    <original>P</original>
    <variation>T</variation>
    <location>
        <position position="58"/>
    </location>
</feature>
<sequence length="482" mass="53435">MSGFRGLVPELENSLWSSPTTSCMSKMCWWLLWGILHTCPTQASVLLAQQSPQQLTSPGYPEPYLKGQESHTDIEAPEGFAVRLTFQDFDLEPSPDCEGDSVTISTGGTDATRLCGRQGSPLGNPPGHREFVSSGRSLRLTFQAHSSSKSKITHLHKGFLALYQAVAVNQPNGDTEAVTTPGAPKIQNHCQDPYYKADQTGTLSCPSSWKWKDRQDGGEVPECVPVCGRPVVPLAENPNTFGSSRAKLGNFPWQAFTSIYGRGGGALLGDRWILTAAHTIYPKDSIYLRRNQNVEVFLGHTDIDELLKLGNHPVRRVVVHPDYRQHESHNFNGDIALLELEQRVPLGPNLLPVCLPDNETLYHSGLWGYVSGFGVEMGWLTTKLKYSKLPVAPREACEAWLHQRQRTEVFSDNMFCVGEEMQVNSVCQGDSGSVYVVWDDLALRWVATGIVSWGIGCGKGYGFYTKVLSYMDWIKRVIEGKD</sequence>
<organism>
    <name type="scientific">Mus musculus</name>
    <name type="common">Mouse</name>
    <dbReference type="NCBI Taxonomy" id="10090"/>
    <lineage>
        <taxon>Eukaryota</taxon>
        <taxon>Metazoa</taxon>
        <taxon>Chordata</taxon>
        <taxon>Craniata</taxon>
        <taxon>Vertebrata</taxon>
        <taxon>Euteleostomi</taxon>
        <taxon>Mammalia</taxon>
        <taxon>Eutheria</taxon>
        <taxon>Euarchontoglires</taxon>
        <taxon>Glires</taxon>
        <taxon>Rodentia</taxon>
        <taxon>Myomorpha</taxon>
        <taxon>Muroidea</taxon>
        <taxon>Muridae</taxon>
        <taxon>Murinae</taxon>
        <taxon>Mus</taxon>
        <taxon>Mus</taxon>
    </lineage>
</organism>
<reference key="1">
    <citation type="journal article" date="2005" name="Science">
        <title>The transcriptional landscape of the mammalian genome.</title>
        <authorList>
            <person name="Carninci P."/>
            <person name="Kasukawa T."/>
            <person name="Katayama S."/>
            <person name="Gough J."/>
            <person name="Frith M.C."/>
            <person name="Maeda N."/>
            <person name="Oyama R."/>
            <person name="Ravasi T."/>
            <person name="Lenhard B."/>
            <person name="Wells C."/>
            <person name="Kodzius R."/>
            <person name="Shimokawa K."/>
            <person name="Bajic V.B."/>
            <person name="Brenner S.E."/>
            <person name="Batalov S."/>
            <person name="Forrest A.R."/>
            <person name="Zavolan M."/>
            <person name="Davis M.J."/>
            <person name="Wilming L.G."/>
            <person name="Aidinis V."/>
            <person name="Allen J.E."/>
            <person name="Ambesi-Impiombato A."/>
            <person name="Apweiler R."/>
            <person name="Aturaliya R.N."/>
            <person name="Bailey T.L."/>
            <person name="Bansal M."/>
            <person name="Baxter L."/>
            <person name="Beisel K.W."/>
            <person name="Bersano T."/>
            <person name="Bono H."/>
            <person name="Chalk A.M."/>
            <person name="Chiu K.P."/>
            <person name="Choudhary V."/>
            <person name="Christoffels A."/>
            <person name="Clutterbuck D.R."/>
            <person name="Crowe M.L."/>
            <person name="Dalla E."/>
            <person name="Dalrymple B.P."/>
            <person name="de Bono B."/>
            <person name="Della Gatta G."/>
            <person name="di Bernardo D."/>
            <person name="Down T."/>
            <person name="Engstrom P."/>
            <person name="Fagiolini M."/>
            <person name="Faulkner G."/>
            <person name="Fletcher C.F."/>
            <person name="Fukushima T."/>
            <person name="Furuno M."/>
            <person name="Futaki S."/>
            <person name="Gariboldi M."/>
            <person name="Georgii-Hemming P."/>
            <person name="Gingeras T.R."/>
            <person name="Gojobori T."/>
            <person name="Green R.E."/>
            <person name="Gustincich S."/>
            <person name="Harbers M."/>
            <person name="Hayashi Y."/>
            <person name="Hensch T.K."/>
            <person name="Hirokawa N."/>
            <person name="Hill D."/>
            <person name="Huminiecki L."/>
            <person name="Iacono M."/>
            <person name="Ikeo K."/>
            <person name="Iwama A."/>
            <person name="Ishikawa T."/>
            <person name="Jakt M."/>
            <person name="Kanapin A."/>
            <person name="Katoh M."/>
            <person name="Kawasawa Y."/>
            <person name="Kelso J."/>
            <person name="Kitamura H."/>
            <person name="Kitano H."/>
            <person name="Kollias G."/>
            <person name="Krishnan S.P."/>
            <person name="Kruger A."/>
            <person name="Kummerfeld S.K."/>
            <person name="Kurochkin I.V."/>
            <person name="Lareau L.F."/>
            <person name="Lazarevic D."/>
            <person name="Lipovich L."/>
            <person name="Liu J."/>
            <person name="Liuni S."/>
            <person name="McWilliam S."/>
            <person name="Madan Babu M."/>
            <person name="Madera M."/>
            <person name="Marchionni L."/>
            <person name="Matsuda H."/>
            <person name="Matsuzawa S."/>
            <person name="Miki H."/>
            <person name="Mignone F."/>
            <person name="Miyake S."/>
            <person name="Morris K."/>
            <person name="Mottagui-Tabar S."/>
            <person name="Mulder N."/>
            <person name="Nakano N."/>
            <person name="Nakauchi H."/>
            <person name="Ng P."/>
            <person name="Nilsson R."/>
            <person name="Nishiguchi S."/>
            <person name="Nishikawa S."/>
            <person name="Nori F."/>
            <person name="Ohara O."/>
            <person name="Okazaki Y."/>
            <person name="Orlando V."/>
            <person name="Pang K.C."/>
            <person name="Pavan W.J."/>
            <person name="Pavesi G."/>
            <person name="Pesole G."/>
            <person name="Petrovsky N."/>
            <person name="Piazza S."/>
            <person name="Reed J."/>
            <person name="Reid J.F."/>
            <person name="Ring B.Z."/>
            <person name="Ringwald M."/>
            <person name="Rost B."/>
            <person name="Ruan Y."/>
            <person name="Salzberg S.L."/>
            <person name="Sandelin A."/>
            <person name="Schneider C."/>
            <person name="Schoenbach C."/>
            <person name="Sekiguchi K."/>
            <person name="Semple C.A."/>
            <person name="Seno S."/>
            <person name="Sessa L."/>
            <person name="Sheng Y."/>
            <person name="Shibata Y."/>
            <person name="Shimada H."/>
            <person name="Shimada K."/>
            <person name="Silva D."/>
            <person name="Sinclair B."/>
            <person name="Sperling S."/>
            <person name="Stupka E."/>
            <person name="Sugiura K."/>
            <person name="Sultana R."/>
            <person name="Takenaka Y."/>
            <person name="Taki K."/>
            <person name="Tammoja K."/>
            <person name="Tan S.L."/>
            <person name="Tang S."/>
            <person name="Taylor M.S."/>
            <person name="Tegner J."/>
            <person name="Teichmann S.A."/>
            <person name="Ueda H.R."/>
            <person name="van Nimwegen E."/>
            <person name="Verardo R."/>
            <person name="Wei C.L."/>
            <person name="Yagi K."/>
            <person name="Yamanishi H."/>
            <person name="Zabarovsky E."/>
            <person name="Zhu S."/>
            <person name="Zimmer A."/>
            <person name="Hide W."/>
            <person name="Bult C."/>
            <person name="Grimmond S.M."/>
            <person name="Teasdale R.D."/>
            <person name="Liu E.T."/>
            <person name="Brusic V."/>
            <person name="Quackenbush J."/>
            <person name="Wahlestedt C."/>
            <person name="Mattick J.S."/>
            <person name="Hume D.A."/>
            <person name="Kai C."/>
            <person name="Sasaki D."/>
            <person name="Tomaru Y."/>
            <person name="Fukuda S."/>
            <person name="Kanamori-Katayama M."/>
            <person name="Suzuki M."/>
            <person name="Aoki J."/>
            <person name="Arakawa T."/>
            <person name="Iida J."/>
            <person name="Imamura K."/>
            <person name="Itoh M."/>
            <person name="Kato T."/>
            <person name="Kawaji H."/>
            <person name="Kawagashira N."/>
            <person name="Kawashima T."/>
            <person name="Kojima M."/>
            <person name="Kondo S."/>
            <person name="Konno H."/>
            <person name="Nakano K."/>
            <person name="Ninomiya N."/>
            <person name="Nishio T."/>
            <person name="Okada M."/>
            <person name="Plessy C."/>
            <person name="Shibata K."/>
            <person name="Shiraki T."/>
            <person name="Suzuki S."/>
            <person name="Tagami M."/>
            <person name="Waki K."/>
            <person name="Watahiki A."/>
            <person name="Okamura-Oho Y."/>
            <person name="Suzuki H."/>
            <person name="Kawai J."/>
            <person name="Hayashizaki Y."/>
        </authorList>
    </citation>
    <scope>NUCLEOTIDE SEQUENCE [LARGE SCALE MRNA]</scope>
    <source>
        <strain>C57BL/6J</strain>
        <tissue>Ovary</tissue>
        <tissue>Thymus</tissue>
        <tissue>Uterus</tissue>
    </source>
</reference>
<reference key="2">
    <citation type="journal article" date="2003" name="Mol. Immunol.">
        <title>A novel murine complement-related gene encoding a C1r-like serum protein.</title>
        <authorList>
            <person name="Circolo A."/>
            <person name="Garnier G."/>
            <person name="Volanakis J.E."/>
        </authorList>
    </citation>
    <scope>NUCLEOTIDE SEQUENCE [MRNA] OF 27-482</scope>
    <scope>NUCLEOTIDE SEQUENCE [GENOMIC DNA] OF 168-482</scope>
    <source>
        <strain>129/SvJ</strain>
        <strain>BALB/cJ</strain>
        <tissue>Liver</tissue>
    </source>
</reference>
<reference key="3">
    <citation type="journal article" date="2004" name="Genome Res.">
        <title>The status, quality, and expansion of the NIH full-length cDNA project: the Mammalian Gene Collection (MGC).</title>
        <authorList>
            <consortium name="The MGC Project Team"/>
        </authorList>
    </citation>
    <scope>NUCLEOTIDE SEQUENCE [LARGE SCALE MRNA] OF 27-482</scope>
    <source>
        <strain>C57BL/6J</strain>
        <tissue>Brain</tissue>
    </source>
</reference>
<accession>Q3UZ09</accession>
<accession>Q3V019</accession>
<accession>Q7TT43</accession>
<accession>Q7TT44</accession>
<name>C1RL_MOUSE</name>
<proteinExistence type="evidence at protein level"/>